<feature type="chain" id="PRO_0000263741" description="Coiled-coil domain-containing protein 124">
    <location>
        <begin position="1"/>
        <end position="217"/>
    </location>
</feature>
<feature type="region of interest" description="Disordered" evidence="3">
    <location>
        <begin position="1"/>
        <end position="95"/>
    </location>
</feature>
<feature type="coiled-coil region" evidence="2">
    <location>
        <begin position="45"/>
        <end position="115"/>
    </location>
</feature>
<feature type="compositionally biased region" description="Basic and acidic residues" evidence="3">
    <location>
        <begin position="18"/>
        <end position="45"/>
    </location>
</feature>
<feature type="compositionally biased region" description="Basic and acidic residues" evidence="3">
    <location>
        <begin position="52"/>
        <end position="74"/>
    </location>
</feature>
<organism>
    <name type="scientific">Xenopus tropicalis</name>
    <name type="common">Western clawed frog</name>
    <name type="synonym">Silurana tropicalis</name>
    <dbReference type="NCBI Taxonomy" id="8364"/>
    <lineage>
        <taxon>Eukaryota</taxon>
        <taxon>Metazoa</taxon>
        <taxon>Chordata</taxon>
        <taxon>Craniata</taxon>
        <taxon>Vertebrata</taxon>
        <taxon>Euteleostomi</taxon>
        <taxon>Amphibia</taxon>
        <taxon>Batrachia</taxon>
        <taxon>Anura</taxon>
        <taxon>Pipoidea</taxon>
        <taxon>Pipidae</taxon>
        <taxon>Xenopodinae</taxon>
        <taxon>Xenopus</taxon>
        <taxon>Silurana</taxon>
    </lineage>
</organism>
<keyword id="KW-0175">Coiled coil</keyword>
<keyword id="KW-0963">Cytoplasm</keyword>
<keyword id="KW-0206">Cytoskeleton</keyword>
<keyword id="KW-1185">Reference proteome</keyword>
<proteinExistence type="evidence at transcript level"/>
<reference key="1">
    <citation type="submission" date="2006-10" db="EMBL/GenBank/DDBJ databases">
        <authorList>
            <consortium name="Sanger Xenopus tropicalis EST/cDNA project"/>
        </authorList>
    </citation>
    <scope>NUCLEOTIDE SEQUENCE [LARGE SCALE MRNA]</scope>
    <source>
        <tissue>Tadpole</tissue>
    </source>
</reference>
<gene>
    <name type="primary">ccdc124</name>
    <name type="ORF">TTpA004i15.1</name>
</gene>
<evidence type="ECO:0000250" key="1">
    <source>
        <dbReference type="UniProtKB" id="Q96CT7"/>
    </source>
</evidence>
<evidence type="ECO:0000255" key="2"/>
<evidence type="ECO:0000256" key="3">
    <source>
        <dbReference type="SAM" id="MobiDB-lite"/>
    </source>
</evidence>
<evidence type="ECO:0000305" key="4"/>
<comment type="function">
    <text evidence="1">Ribosome-binding protein involved in ribosome hibernation: associates with translationally inactive ribosomes and stabilizes the nonrotated conformation of the 80S ribosome, thereby promoting ribosome preservation and storage.</text>
</comment>
<comment type="subunit">
    <text evidence="1">Associates with translationally inactive ribosomes in the nonrotated state.</text>
</comment>
<comment type="subcellular location">
    <subcellularLocation>
        <location evidence="1">Cytoplasm</location>
        <location evidence="1">Cytoskeleton</location>
        <location evidence="1">Microtubule organizing center</location>
        <location evidence="1">Centrosome</location>
    </subcellularLocation>
    <subcellularLocation>
        <location evidence="1">Midbody</location>
    </subcellularLocation>
    <text evidence="1">Colocalizes with gamma-tubulin at interphase, prophase, metaphase, and anaphase. Relocates from centrosome to midbody at telophase.</text>
</comment>
<comment type="similarity">
    <text evidence="4">Belongs to the CCDC124 family.</text>
</comment>
<dbReference type="EMBL" id="CR760809">
    <property type="protein sequence ID" value="CAJ83215.1"/>
    <property type="molecule type" value="mRNA"/>
</dbReference>
<dbReference type="RefSeq" id="NP_001016496.1">
    <property type="nucleotide sequence ID" value="NM_001016496.2"/>
</dbReference>
<dbReference type="RefSeq" id="XP_012817852.1">
    <property type="nucleotide sequence ID" value="XM_012962398.3"/>
</dbReference>
<dbReference type="SMR" id="Q28HN4"/>
<dbReference type="FunCoup" id="Q28HN4">
    <property type="interactions" value="1574"/>
</dbReference>
<dbReference type="STRING" id="8364.ENSXETP00000041728"/>
<dbReference type="GeneID" id="549250"/>
<dbReference type="KEGG" id="xtr:549250"/>
<dbReference type="AGR" id="Xenbase:XB-GENE-1015198"/>
<dbReference type="CTD" id="115098"/>
<dbReference type="Xenbase" id="XB-GENE-1015198">
    <property type="gene designation" value="ccdc124"/>
</dbReference>
<dbReference type="eggNOG" id="KOG3223">
    <property type="taxonomic scope" value="Eukaryota"/>
</dbReference>
<dbReference type="InParanoid" id="Q28HN4"/>
<dbReference type="OMA" id="FEERMMP"/>
<dbReference type="OrthoDB" id="76412at2759"/>
<dbReference type="PhylomeDB" id="Q28HN4"/>
<dbReference type="Proteomes" id="UP000008143">
    <property type="component" value="Chromosome 1"/>
</dbReference>
<dbReference type="Bgee" id="ENSXETG00000013543">
    <property type="expression patterns" value="Expressed in heart and 13 other cell types or tissues"/>
</dbReference>
<dbReference type="ExpressionAtlas" id="Q28HN4">
    <property type="expression patterns" value="baseline and differential"/>
</dbReference>
<dbReference type="GO" id="GO:0005813">
    <property type="term" value="C:centrosome"/>
    <property type="evidence" value="ECO:0007669"/>
    <property type="project" value="UniProtKB-SubCell"/>
</dbReference>
<dbReference type="GO" id="GO:0005737">
    <property type="term" value="C:cytoplasm"/>
    <property type="evidence" value="ECO:0007669"/>
    <property type="project" value="UniProtKB-KW"/>
</dbReference>
<dbReference type="GO" id="GO:0030496">
    <property type="term" value="C:midbody"/>
    <property type="evidence" value="ECO:0007669"/>
    <property type="project" value="UniProtKB-SubCell"/>
</dbReference>
<dbReference type="InterPro" id="IPR010422">
    <property type="entry name" value="Ccdc124/Oxs1"/>
</dbReference>
<dbReference type="InterPro" id="IPR054414">
    <property type="entry name" value="Ccdc124/Oxs1_C"/>
</dbReference>
<dbReference type="InterPro" id="IPR036910">
    <property type="entry name" value="HMG_box_dom_sf"/>
</dbReference>
<dbReference type="PANTHER" id="PTHR21680">
    <property type="entry name" value="COILED-COIL DOMAIN-CONTAINING PROTEIN 124"/>
    <property type="match status" value="1"/>
</dbReference>
<dbReference type="PANTHER" id="PTHR21680:SF0">
    <property type="entry name" value="COILED-COIL DOMAIN-CONTAINING PROTEIN 124"/>
    <property type="match status" value="1"/>
</dbReference>
<dbReference type="Pfam" id="PF06244">
    <property type="entry name" value="Ccdc124"/>
    <property type="match status" value="1"/>
</dbReference>
<dbReference type="SUPFAM" id="SSF47095">
    <property type="entry name" value="HMG-box"/>
    <property type="match status" value="1"/>
</dbReference>
<sequence>MPKKFQGENTKSAVARARKAEAKAVADAKRQKEIEDAYWQDDDKHVMRKGQRKEDKEKKRLEQLERKKESQRLLEEEDSKMKGKPIKPAAPSKVTRAQIEETLHREEEEKAISEKPKTHLEIPLEENLNRRILEEGEVEARTVEDAIAALSMSKELDRHPERRMKAAFTAFEEINMPRIKQENPNMRLSQLKQLLKKEWMKSPENPMNQQHATYNAQ</sequence>
<accession>Q28HN4</accession>
<protein>
    <recommendedName>
        <fullName>Coiled-coil domain-containing protein 124</fullName>
    </recommendedName>
</protein>
<name>CC124_XENTR</name>